<proteinExistence type="inferred from homology"/>
<sequence length="100" mass="11476">MGALTKAEMAERLYEELGLNKREAKELVELFFEEIRHALEDNEQVKLSGFGNFDLRDKRQRPGRNPKTGEEIPITARRVVTFRPGQKLKARVEAYAGTKS</sequence>
<keyword id="KW-0233">DNA recombination</keyword>
<keyword id="KW-0238">DNA-binding</keyword>
<keyword id="KW-1185">Reference proteome</keyword>
<keyword id="KW-0804">Transcription</keyword>
<keyword id="KW-0805">Transcription regulation</keyword>
<keyword id="KW-0810">Translation regulation</keyword>
<feature type="chain" id="PRO_0000105020" description="Integration host factor subunit alpha">
    <location>
        <begin position="1"/>
        <end position="100"/>
    </location>
</feature>
<feature type="region of interest" description="Disordered" evidence="2">
    <location>
        <begin position="54"/>
        <end position="73"/>
    </location>
</feature>
<reference key="1">
    <citation type="journal article" date="2003" name="Proc. Natl. Acad. Sci. U.S.A.">
        <title>The complete genome sequence of the Arabidopsis and tomato pathogen Pseudomonas syringae pv. tomato DC3000.</title>
        <authorList>
            <person name="Buell C.R."/>
            <person name="Joardar V."/>
            <person name="Lindeberg M."/>
            <person name="Selengut J."/>
            <person name="Paulsen I.T."/>
            <person name="Gwinn M.L."/>
            <person name="Dodson R.J."/>
            <person name="DeBoy R.T."/>
            <person name="Durkin A.S."/>
            <person name="Kolonay J.F."/>
            <person name="Madupu R."/>
            <person name="Daugherty S.C."/>
            <person name="Brinkac L.M."/>
            <person name="Beanan M.J."/>
            <person name="Haft D.H."/>
            <person name="Nelson W.C."/>
            <person name="Davidsen T.M."/>
            <person name="Zafar N."/>
            <person name="Zhou L."/>
            <person name="Liu J."/>
            <person name="Yuan Q."/>
            <person name="Khouri H.M."/>
            <person name="Fedorova N.B."/>
            <person name="Tran B."/>
            <person name="Russell D."/>
            <person name="Berry K.J."/>
            <person name="Utterback T.R."/>
            <person name="Van Aken S.E."/>
            <person name="Feldblyum T.V."/>
            <person name="D'Ascenzo M."/>
            <person name="Deng W.-L."/>
            <person name="Ramos A.R."/>
            <person name="Alfano J.R."/>
            <person name="Cartinhour S."/>
            <person name="Chatterjee A.K."/>
            <person name="Delaney T.P."/>
            <person name="Lazarowitz S.G."/>
            <person name="Martin G.B."/>
            <person name="Schneider D.J."/>
            <person name="Tang X."/>
            <person name="Bender C.L."/>
            <person name="White O."/>
            <person name="Fraser C.M."/>
            <person name="Collmer A."/>
        </authorList>
    </citation>
    <scope>NUCLEOTIDE SEQUENCE [LARGE SCALE GENOMIC DNA]</scope>
    <source>
        <strain>ATCC BAA-871 / DC3000</strain>
    </source>
</reference>
<dbReference type="EMBL" id="AE016853">
    <property type="protein sequence ID" value="AAO55895.1"/>
    <property type="molecule type" value="Genomic_DNA"/>
</dbReference>
<dbReference type="RefSeq" id="NP_792200.1">
    <property type="nucleotide sequence ID" value="NC_004578.1"/>
</dbReference>
<dbReference type="RefSeq" id="WP_002553164.1">
    <property type="nucleotide sequence ID" value="NC_004578.1"/>
</dbReference>
<dbReference type="SMR" id="Q883H6"/>
<dbReference type="STRING" id="223283.PSPTO_2384"/>
<dbReference type="GeneID" id="98284088"/>
<dbReference type="KEGG" id="pst:PSPTO_2384"/>
<dbReference type="PATRIC" id="fig|223283.9.peg.2419"/>
<dbReference type="eggNOG" id="COG0776">
    <property type="taxonomic scope" value="Bacteria"/>
</dbReference>
<dbReference type="HOGENOM" id="CLU_105066_1_3_6"/>
<dbReference type="OrthoDB" id="9797747at2"/>
<dbReference type="PhylomeDB" id="Q883H6"/>
<dbReference type="PRO" id="PR:Q883H6"/>
<dbReference type="Proteomes" id="UP000002515">
    <property type="component" value="Chromosome"/>
</dbReference>
<dbReference type="GO" id="GO:0005829">
    <property type="term" value="C:cytosol"/>
    <property type="evidence" value="ECO:0007669"/>
    <property type="project" value="TreeGrafter"/>
</dbReference>
<dbReference type="GO" id="GO:0003677">
    <property type="term" value="F:DNA binding"/>
    <property type="evidence" value="ECO:0007669"/>
    <property type="project" value="UniProtKB-UniRule"/>
</dbReference>
<dbReference type="GO" id="GO:0030527">
    <property type="term" value="F:structural constituent of chromatin"/>
    <property type="evidence" value="ECO:0007669"/>
    <property type="project" value="InterPro"/>
</dbReference>
<dbReference type="GO" id="GO:0006310">
    <property type="term" value="P:DNA recombination"/>
    <property type="evidence" value="ECO:0007669"/>
    <property type="project" value="UniProtKB-UniRule"/>
</dbReference>
<dbReference type="GO" id="GO:0009893">
    <property type="term" value="P:positive regulation of metabolic process"/>
    <property type="evidence" value="ECO:0007669"/>
    <property type="project" value="UniProtKB-ARBA"/>
</dbReference>
<dbReference type="GO" id="GO:0006355">
    <property type="term" value="P:regulation of DNA-templated transcription"/>
    <property type="evidence" value="ECO:0007669"/>
    <property type="project" value="UniProtKB-UniRule"/>
</dbReference>
<dbReference type="GO" id="GO:0006417">
    <property type="term" value="P:regulation of translation"/>
    <property type="evidence" value="ECO:0007669"/>
    <property type="project" value="UniProtKB-UniRule"/>
</dbReference>
<dbReference type="CDD" id="cd13835">
    <property type="entry name" value="IHF_A"/>
    <property type="match status" value="1"/>
</dbReference>
<dbReference type="FunFam" id="4.10.520.10:FF:000002">
    <property type="entry name" value="Integration host factor subunit alpha"/>
    <property type="match status" value="1"/>
</dbReference>
<dbReference type="Gene3D" id="4.10.520.10">
    <property type="entry name" value="IHF-like DNA-binding proteins"/>
    <property type="match status" value="1"/>
</dbReference>
<dbReference type="HAMAP" id="MF_00380">
    <property type="entry name" value="IHF_alpha"/>
    <property type="match status" value="1"/>
</dbReference>
<dbReference type="InterPro" id="IPR000119">
    <property type="entry name" value="Hist_DNA-bd"/>
</dbReference>
<dbReference type="InterPro" id="IPR020816">
    <property type="entry name" value="Histone-like_DNA-bd_CS"/>
</dbReference>
<dbReference type="InterPro" id="IPR010992">
    <property type="entry name" value="IHF-like_DNA-bd_dom_sf"/>
</dbReference>
<dbReference type="InterPro" id="IPR005684">
    <property type="entry name" value="IHF_alpha"/>
</dbReference>
<dbReference type="NCBIfam" id="TIGR00987">
    <property type="entry name" value="himA"/>
    <property type="match status" value="1"/>
</dbReference>
<dbReference type="NCBIfam" id="NF001401">
    <property type="entry name" value="PRK00285.1"/>
    <property type="match status" value="1"/>
</dbReference>
<dbReference type="PANTHER" id="PTHR33175">
    <property type="entry name" value="DNA-BINDING PROTEIN HU"/>
    <property type="match status" value="1"/>
</dbReference>
<dbReference type="PANTHER" id="PTHR33175:SF2">
    <property type="entry name" value="INTEGRATION HOST FACTOR SUBUNIT ALPHA"/>
    <property type="match status" value="1"/>
</dbReference>
<dbReference type="Pfam" id="PF00216">
    <property type="entry name" value="Bac_DNA_binding"/>
    <property type="match status" value="1"/>
</dbReference>
<dbReference type="PRINTS" id="PR01727">
    <property type="entry name" value="DNABINDINGHU"/>
</dbReference>
<dbReference type="SMART" id="SM00411">
    <property type="entry name" value="BHL"/>
    <property type="match status" value="1"/>
</dbReference>
<dbReference type="SUPFAM" id="SSF47729">
    <property type="entry name" value="IHF-like DNA-binding proteins"/>
    <property type="match status" value="1"/>
</dbReference>
<dbReference type="PROSITE" id="PS00045">
    <property type="entry name" value="HISTONE_LIKE"/>
    <property type="match status" value="1"/>
</dbReference>
<evidence type="ECO:0000255" key="1">
    <source>
        <dbReference type="HAMAP-Rule" id="MF_00380"/>
    </source>
</evidence>
<evidence type="ECO:0000256" key="2">
    <source>
        <dbReference type="SAM" id="MobiDB-lite"/>
    </source>
</evidence>
<comment type="function">
    <text evidence="1">This protein is one of the two subunits of integration host factor, a specific DNA-binding protein that functions in genetic recombination as well as in transcriptional and translational control.</text>
</comment>
<comment type="subunit">
    <text evidence="1">Heterodimer of an alpha and a beta chain.</text>
</comment>
<comment type="similarity">
    <text evidence="1">Belongs to the bacterial histone-like protein family.</text>
</comment>
<accession>Q883H6</accession>
<protein>
    <recommendedName>
        <fullName evidence="1">Integration host factor subunit alpha</fullName>
        <shortName evidence="1">IHF-alpha</shortName>
    </recommendedName>
</protein>
<name>IHFA_PSESM</name>
<organism>
    <name type="scientific">Pseudomonas syringae pv. tomato (strain ATCC BAA-871 / DC3000)</name>
    <dbReference type="NCBI Taxonomy" id="223283"/>
    <lineage>
        <taxon>Bacteria</taxon>
        <taxon>Pseudomonadati</taxon>
        <taxon>Pseudomonadota</taxon>
        <taxon>Gammaproteobacteria</taxon>
        <taxon>Pseudomonadales</taxon>
        <taxon>Pseudomonadaceae</taxon>
        <taxon>Pseudomonas</taxon>
    </lineage>
</organism>
<gene>
    <name evidence="1" type="primary">ihfA</name>
    <name evidence="1" type="synonym">himA</name>
    <name type="ordered locus">PSPTO_2384</name>
</gene>